<name>EFG2_BORA1</name>
<protein>
    <recommendedName>
        <fullName evidence="1">Elongation factor G 2</fullName>
        <shortName evidence="1">EF-G 2</shortName>
    </recommendedName>
</protein>
<proteinExistence type="inferred from homology"/>
<dbReference type="EMBL" id="AM167904">
    <property type="protein sequence ID" value="CAJ50529.1"/>
    <property type="molecule type" value="Genomic_DNA"/>
</dbReference>
<dbReference type="RefSeq" id="WP_012418558.1">
    <property type="nucleotide sequence ID" value="NC_010645.1"/>
</dbReference>
<dbReference type="SMR" id="Q2KV83"/>
<dbReference type="STRING" id="360910.BAV2919"/>
<dbReference type="GeneID" id="92933824"/>
<dbReference type="KEGG" id="bav:BAV2919"/>
<dbReference type="eggNOG" id="COG0480">
    <property type="taxonomic scope" value="Bacteria"/>
</dbReference>
<dbReference type="HOGENOM" id="CLU_002794_4_1_4"/>
<dbReference type="OrthoDB" id="9804431at2"/>
<dbReference type="Proteomes" id="UP000001977">
    <property type="component" value="Chromosome"/>
</dbReference>
<dbReference type="GO" id="GO:0005737">
    <property type="term" value="C:cytoplasm"/>
    <property type="evidence" value="ECO:0007669"/>
    <property type="project" value="UniProtKB-SubCell"/>
</dbReference>
<dbReference type="GO" id="GO:0005525">
    <property type="term" value="F:GTP binding"/>
    <property type="evidence" value="ECO:0007669"/>
    <property type="project" value="UniProtKB-UniRule"/>
</dbReference>
<dbReference type="GO" id="GO:0003924">
    <property type="term" value="F:GTPase activity"/>
    <property type="evidence" value="ECO:0007669"/>
    <property type="project" value="InterPro"/>
</dbReference>
<dbReference type="GO" id="GO:0097216">
    <property type="term" value="F:guanosine tetraphosphate binding"/>
    <property type="evidence" value="ECO:0007669"/>
    <property type="project" value="UniProtKB-ARBA"/>
</dbReference>
<dbReference type="GO" id="GO:0003746">
    <property type="term" value="F:translation elongation factor activity"/>
    <property type="evidence" value="ECO:0007669"/>
    <property type="project" value="UniProtKB-UniRule"/>
</dbReference>
<dbReference type="GO" id="GO:0032790">
    <property type="term" value="P:ribosome disassembly"/>
    <property type="evidence" value="ECO:0007669"/>
    <property type="project" value="TreeGrafter"/>
</dbReference>
<dbReference type="CDD" id="cd01886">
    <property type="entry name" value="EF-G"/>
    <property type="match status" value="1"/>
</dbReference>
<dbReference type="CDD" id="cd16262">
    <property type="entry name" value="EFG_III"/>
    <property type="match status" value="1"/>
</dbReference>
<dbReference type="CDD" id="cd01434">
    <property type="entry name" value="EFG_mtEFG1_IV"/>
    <property type="match status" value="1"/>
</dbReference>
<dbReference type="CDD" id="cd03713">
    <property type="entry name" value="EFG_mtEFG_C"/>
    <property type="match status" value="1"/>
</dbReference>
<dbReference type="CDD" id="cd04088">
    <property type="entry name" value="EFG_mtEFG_II"/>
    <property type="match status" value="1"/>
</dbReference>
<dbReference type="FunFam" id="2.40.30.10:FF:000006">
    <property type="entry name" value="Elongation factor G"/>
    <property type="match status" value="1"/>
</dbReference>
<dbReference type="FunFam" id="3.30.230.10:FF:000003">
    <property type="entry name" value="Elongation factor G"/>
    <property type="match status" value="1"/>
</dbReference>
<dbReference type="FunFam" id="3.30.70.240:FF:000001">
    <property type="entry name" value="Elongation factor G"/>
    <property type="match status" value="1"/>
</dbReference>
<dbReference type="FunFam" id="3.30.70.870:FF:000001">
    <property type="entry name" value="Elongation factor G"/>
    <property type="match status" value="1"/>
</dbReference>
<dbReference type="FunFam" id="3.40.50.300:FF:000029">
    <property type="entry name" value="Elongation factor G"/>
    <property type="match status" value="1"/>
</dbReference>
<dbReference type="Gene3D" id="3.30.230.10">
    <property type="match status" value="1"/>
</dbReference>
<dbReference type="Gene3D" id="3.30.70.240">
    <property type="match status" value="1"/>
</dbReference>
<dbReference type="Gene3D" id="3.30.70.870">
    <property type="entry name" value="Elongation Factor G (Translational Gtpase), domain 3"/>
    <property type="match status" value="1"/>
</dbReference>
<dbReference type="Gene3D" id="3.40.50.300">
    <property type="entry name" value="P-loop containing nucleotide triphosphate hydrolases"/>
    <property type="match status" value="1"/>
</dbReference>
<dbReference type="Gene3D" id="2.40.30.10">
    <property type="entry name" value="Translation factors"/>
    <property type="match status" value="1"/>
</dbReference>
<dbReference type="HAMAP" id="MF_00054_B">
    <property type="entry name" value="EF_G_EF_2_B"/>
    <property type="match status" value="1"/>
</dbReference>
<dbReference type="InterPro" id="IPR041095">
    <property type="entry name" value="EFG_II"/>
</dbReference>
<dbReference type="InterPro" id="IPR009022">
    <property type="entry name" value="EFG_III"/>
</dbReference>
<dbReference type="InterPro" id="IPR035647">
    <property type="entry name" value="EFG_III/V"/>
</dbReference>
<dbReference type="InterPro" id="IPR047872">
    <property type="entry name" value="EFG_IV"/>
</dbReference>
<dbReference type="InterPro" id="IPR035649">
    <property type="entry name" value="EFG_V"/>
</dbReference>
<dbReference type="InterPro" id="IPR000640">
    <property type="entry name" value="EFG_V-like"/>
</dbReference>
<dbReference type="InterPro" id="IPR004161">
    <property type="entry name" value="EFTu-like_2"/>
</dbReference>
<dbReference type="InterPro" id="IPR031157">
    <property type="entry name" value="G_TR_CS"/>
</dbReference>
<dbReference type="InterPro" id="IPR027417">
    <property type="entry name" value="P-loop_NTPase"/>
</dbReference>
<dbReference type="InterPro" id="IPR020568">
    <property type="entry name" value="Ribosomal_Su5_D2-typ_SF"/>
</dbReference>
<dbReference type="InterPro" id="IPR014721">
    <property type="entry name" value="Ribsml_uS5_D2-typ_fold_subgr"/>
</dbReference>
<dbReference type="InterPro" id="IPR005225">
    <property type="entry name" value="Small_GTP-bd"/>
</dbReference>
<dbReference type="InterPro" id="IPR000795">
    <property type="entry name" value="T_Tr_GTP-bd_dom"/>
</dbReference>
<dbReference type="InterPro" id="IPR009000">
    <property type="entry name" value="Transl_B-barrel_sf"/>
</dbReference>
<dbReference type="InterPro" id="IPR004540">
    <property type="entry name" value="Transl_elong_EFG/EF2"/>
</dbReference>
<dbReference type="InterPro" id="IPR005517">
    <property type="entry name" value="Transl_elong_EFG/EF2_IV"/>
</dbReference>
<dbReference type="NCBIfam" id="TIGR00484">
    <property type="entry name" value="EF-G"/>
    <property type="match status" value="1"/>
</dbReference>
<dbReference type="NCBIfam" id="NF009381">
    <property type="entry name" value="PRK12740.1-5"/>
    <property type="match status" value="1"/>
</dbReference>
<dbReference type="NCBIfam" id="TIGR00231">
    <property type="entry name" value="small_GTP"/>
    <property type="match status" value="1"/>
</dbReference>
<dbReference type="PANTHER" id="PTHR43261:SF1">
    <property type="entry name" value="RIBOSOME-RELEASING FACTOR 2, MITOCHONDRIAL"/>
    <property type="match status" value="1"/>
</dbReference>
<dbReference type="PANTHER" id="PTHR43261">
    <property type="entry name" value="TRANSLATION ELONGATION FACTOR G-RELATED"/>
    <property type="match status" value="1"/>
</dbReference>
<dbReference type="Pfam" id="PF00679">
    <property type="entry name" value="EFG_C"/>
    <property type="match status" value="1"/>
</dbReference>
<dbReference type="Pfam" id="PF14492">
    <property type="entry name" value="EFG_III"/>
    <property type="match status" value="1"/>
</dbReference>
<dbReference type="Pfam" id="PF03764">
    <property type="entry name" value="EFG_IV"/>
    <property type="match status" value="1"/>
</dbReference>
<dbReference type="Pfam" id="PF00009">
    <property type="entry name" value="GTP_EFTU"/>
    <property type="match status" value="1"/>
</dbReference>
<dbReference type="Pfam" id="PF03144">
    <property type="entry name" value="GTP_EFTU_D2"/>
    <property type="match status" value="1"/>
</dbReference>
<dbReference type="PRINTS" id="PR00315">
    <property type="entry name" value="ELONGATNFCT"/>
</dbReference>
<dbReference type="SMART" id="SM00838">
    <property type="entry name" value="EFG_C"/>
    <property type="match status" value="1"/>
</dbReference>
<dbReference type="SMART" id="SM00889">
    <property type="entry name" value="EFG_IV"/>
    <property type="match status" value="1"/>
</dbReference>
<dbReference type="SUPFAM" id="SSF54980">
    <property type="entry name" value="EF-G C-terminal domain-like"/>
    <property type="match status" value="2"/>
</dbReference>
<dbReference type="SUPFAM" id="SSF52540">
    <property type="entry name" value="P-loop containing nucleoside triphosphate hydrolases"/>
    <property type="match status" value="1"/>
</dbReference>
<dbReference type="SUPFAM" id="SSF54211">
    <property type="entry name" value="Ribosomal protein S5 domain 2-like"/>
    <property type="match status" value="1"/>
</dbReference>
<dbReference type="SUPFAM" id="SSF50447">
    <property type="entry name" value="Translation proteins"/>
    <property type="match status" value="1"/>
</dbReference>
<dbReference type="PROSITE" id="PS00301">
    <property type="entry name" value="G_TR_1"/>
    <property type="match status" value="1"/>
</dbReference>
<dbReference type="PROSITE" id="PS51722">
    <property type="entry name" value="G_TR_2"/>
    <property type="match status" value="1"/>
</dbReference>
<comment type="function">
    <text evidence="1">Catalyzes the GTP-dependent ribosomal translocation step during translation elongation. During this step, the ribosome changes from the pre-translocational (PRE) to the post-translocational (POST) state as the newly formed A-site-bound peptidyl-tRNA and P-site-bound deacylated tRNA move to the P and E sites, respectively. Catalyzes the coordinated movement of the two tRNA molecules, the mRNA and conformational changes in the ribosome.</text>
</comment>
<comment type="subcellular location">
    <subcellularLocation>
        <location evidence="1">Cytoplasm</location>
    </subcellularLocation>
</comment>
<comment type="similarity">
    <text evidence="1">Belongs to the TRAFAC class translation factor GTPase superfamily. Classic translation factor GTPase family. EF-G/EF-2 subfamily.</text>
</comment>
<evidence type="ECO:0000255" key="1">
    <source>
        <dbReference type="HAMAP-Rule" id="MF_00054"/>
    </source>
</evidence>
<accession>Q2KV83</accession>
<feature type="chain" id="PRO_0000263429" description="Elongation factor G 2">
    <location>
        <begin position="1"/>
        <end position="705"/>
    </location>
</feature>
<feature type="domain" description="tr-type G">
    <location>
        <begin position="8"/>
        <end position="290"/>
    </location>
</feature>
<feature type="binding site" evidence="1">
    <location>
        <begin position="17"/>
        <end position="24"/>
    </location>
    <ligand>
        <name>GTP</name>
        <dbReference type="ChEBI" id="CHEBI:37565"/>
    </ligand>
</feature>
<feature type="binding site" evidence="1">
    <location>
        <begin position="88"/>
        <end position="92"/>
    </location>
    <ligand>
        <name>GTP</name>
        <dbReference type="ChEBI" id="CHEBI:37565"/>
    </ligand>
</feature>
<feature type="binding site" evidence="1">
    <location>
        <begin position="142"/>
        <end position="145"/>
    </location>
    <ligand>
        <name>GTP</name>
        <dbReference type="ChEBI" id="CHEBI:37565"/>
    </ligand>
</feature>
<reference key="1">
    <citation type="journal article" date="2006" name="J. Bacteriol.">
        <title>Comparison of the genome sequence of the poultry pathogen Bordetella avium with those of B. bronchiseptica, B. pertussis, and B. parapertussis reveals extensive diversity in surface structures associated with host interaction.</title>
        <authorList>
            <person name="Sebaihia M."/>
            <person name="Preston A."/>
            <person name="Maskell D.J."/>
            <person name="Kuzmiak H."/>
            <person name="Connell T.D."/>
            <person name="King N.D."/>
            <person name="Orndorff P.E."/>
            <person name="Miyamoto D.M."/>
            <person name="Thomson N.R."/>
            <person name="Harris D."/>
            <person name="Goble A."/>
            <person name="Lord A."/>
            <person name="Murphy L."/>
            <person name="Quail M.A."/>
            <person name="Rutter S."/>
            <person name="Squares R."/>
            <person name="Squares S."/>
            <person name="Woodward J."/>
            <person name="Parkhill J."/>
            <person name="Temple L.M."/>
        </authorList>
    </citation>
    <scope>NUCLEOTIDE SEQUENCE [LARGE SCALE GENOMIC DNA]</scope>
    <source>
        <strain>197N</strain>
    </source>
</reference>
<keyword id="KW-0963">Cytoplasm</keyword>
<keyword id="KW-0251">Elongation factor</keyword>
<keyword id="KW-0342">GTP-binding</keyword>
<keyword id="KW-0547">Nucleotide-binding</keyword>
<keyword id="KW-0648">Protein biosynthesis</keyword>
<keyword id="KW-1185">Reference proteome</keyword>
<sequence length="705" mass="78035">MTRRTPIELYRNIGISAHIDAGKTTTTERILFYTGITHKLGEVHEGAAVMDWMEQEQERGITITSAATTAFWRGMAGNYPEHRINIIDTPGHVDFTIEVERSMRVLDGACMVYDSVGGVQPQSETVWRQANKYRVPRIAFVNKMDRIGADFLRVQRQIVERLKGDAVPVQLPIGAEDNFQGVVDLVKMKAILWDEASQGVSFKYEDVPAPMLELANQWRDKLVEKAAEANEVLLEKYLSGEALSEEEIKTGLRQRTIANEIVPMLCGSAFKNKGVQAMLDAVLDYLPSPLDVPAIKGHDEHDKEIERRPSDKDPFSALAFKIMTDPFVGQLVFFRAYSGVVKSGDSVLNPLKNKKERLGRILQMHANERKEINEVYAGDIAAAVGLKDVTTGDTLTDPGHVIILERMIFPEPVISQAVEPKTKADQEKMSLALNRLAQEDPSFRVRTDEESGQTIISGMGELHLEILVDRMKREFNVEATVGKPQVAYRETIRKKVEGVEGKFVKQSGGRGQYGHAVITVEPQAAGKGFEFIDAIKGGVIPREFIPAVERGIVDTLNTGVLAGYPVVDVKVTLTFGSYHDVDSNENAFRMAGSMAFKEGLRRATPVLLEPMMQVEVETPEDFTGNVMGDLSSRRGMVQGMEDIAGGGGKLVRAEVPLAEMFGYSTSLRSLTQGRATYSMEFKHYAEAPRQVAEQVIAARTGSTRA</sequence>
<organism>
    <name type="scientific">Bordetella avium (strain 197N)</name>
    <dbReference type="NCBI Taxonomy" id="360910"/>
    <lineage>
        <taxon>Bacteria</taxon>
        <taxon>Pseudomonadati</taxon>
        <taxon>Pseudomonadota</taxon>
        <taxon>Betaproteobacteria</taxon>
        <taxon>Burkholderiales</taxon>
        <taxon>Alcaligenaceae</taxon>
        <taxon>Bordetella</taxon>
    </lineage>
</organism>
<gene>
    <name evidence="1" type="primary">fusA2</name>
    <name type="ordered locus">BAV2919</name>
</gene>